<accession>Q2KS19</accession>
<sequence length="145" mass="16150">MRADREELDLPPPIGGVAIDVVKVEVPATGRTLVLAFVKTCAVLAAVHGLYILHEVDLTTAHKEAEWEFEPLAWRVWLVVFYFGCLSLTVWLLEGSYGGSDHHAARAQSPDVRARRSELDDNIAQMGAVHGLELPRRQVLRRRGT</sequence>
<organism>
    <name type="scientific">Human adenovirus C serotype 5</name>
    <name type="common">HAdV-5</name>
    <name type="synonym">Human adenovirus 5</name>
    <dbReference type="NCBI Taxonomy" id="28285"/>
    <lineage>
        <taxon>Viruses</taxon>
        <taxon>Varidnaviria</taxon>
        <taxon>Bamfordvirae</taxon>
        <taxon>Preplasmiviricota</taxon>
        <taxon>Tectiliviricetes</taxon>
        <taxon>Rowavirales</taxon>
        <taxon>Adenoviridae</taxon>
        <taxon>Mastadenovirus</taxon>
        <taxon>Human mastadenovirus C</taxon>
    </lineage>
</organism>
<comment type="subcellular location">
    <subcellularLocation>
        <location>Host cytoplasm</location>
        <location>Host perinuclear region</location>
    </subcellularLocation>
    <text evidence="1">Might be loosely associated with the nuclear membrane.</text>
</comment>
<comment type="induction">
    <text evidence="2">Expressed in the intermediate phase of the viral replicative cycle.</text>
</comment>
<comment type="miscellaneous">
    <text>Very stable protein with a low turnover rate.</text>
</comment>
<comment type="similarity">
    <text evidence="2">Belongs to the adenoviridae leader protein family.</text>
</comment>
<comment type="sequence caution" evidence="2">
    <conflict type="erroneous gene model prediction">
        <sequence resource="EMBL-CDS" id="AAW65503"/>
    </conflict>
</comment>
<dbReference type="EMBL" id="AY601635">
    <property type="protein sequence ID" value="AAW65503.1"/>
    <property type="status" value="ALT_SEQ"/>
    <property type="molecule type" value="Genomic_DNA"/>
</dbReference>
<dbReference type="Proteomes" id="UP000125273">
    <property type="component" value="Genome"/>
</dbReference>
<dbReference type="GO" id="GO:0044220">
    <property type="term" value="C:host cell perinuclear region of cytoplasm"/>
    <property type="evidence" value="ECO:0007669"/>
    <property type="project" value="UniProtKB-SubCell"/>
</dbReference>
<dbReference type="InterPro" id="IPR004292">
    <property type="entry name" value="L1-like"/>
</dbReference>
<dbReference type="Pfam" id="PF03052">
    <property type="entry name" value="Adeno_52K"/>
    <property type="match status" value="1"/>
</dbReference>
<evidence type="ECO:0000250" key="1"/>
<evidence type="ECO:0000305" key="2"/>
<proteinExistence type="evidence at transcript level"/>
<name>LEAD_ADE05</name>
<keyword id="KW-1035">Host cytoplasm</keyword>
<feature type="chain" id="PRO_0000421135" description="I-leader protein">
    <location>
        <begin position="1"/>
        <end position="145"/>
    </location>
</feature>
<protein>
    <recommendedName>
        <fullName>I-leader protein</fullName>
    </recommendedName>
</protein>
<organismHost>
    <name type="scientific">Homo sapiens</name>
    <name type="common">Human</name>
    <dbReference type="NCBI Taxonomy" id="9606"/>
</organismHost>
<reference key="1">
    <citation type="journal article" date="1992" name="Virology">
        <title>The sequence of the genome of adenovirus type 5 and its comparison with the genome of adenovirus type 2.</title>
        <authorList>
            <person name="Chroboczek J."/>
            <person name="Bieber F."/>
            <person name="Jacrot B."/>
        </authorList>
    </citation>
    <scope>NUCLEOTIDE SEQUENCE [GENOMIC DNA]</scope>
</reference>
<reference key="2">
    <citation type="journal article" date="2006" name="Genome Res.">
        <title>Broad-spectrum respiratory tract pathogen identification using resequencing DNA microarrays.</title>
        <authorList>
            <person name="Lin B."/>
            <person name="Wang Z."/>
            <person name="Vora G.J."/>
            <person name="Thornton J.A."/>
            <person name="Schnur J.M."/>
            <person name="Thach D.C."/>
            <person name="Blaney K.M."/>
            <person name="Ligler A.G."/>
            <person name="Malanoski A.P."/>
            <person name="Santiago J."/>
            <person name="Walter E.A."/>
            <person name="Agan B.K."/>
            <person name="Metzgar D."/>
            <person name="Seto D."/>
            <person name="Daum L.T."/>
            <person name="Kruzelock R."/>
            <person name="Rowley R.K."/>
            <person name="Hanson E.H."/>
            <person name="Tibbetts C."/>
            <person name="Stenger D.A."/>
        </authorList>
    </citation>
    <scope>NUCLEOTIDE SEQUENCE [GENOMIC DNA]</scope>
    <source>
        <strain>Isolate NHRC Ad5FS 7151</strain>
    </source>
</reference>
<reference key="3">
    <citation type="journal article" date="2012" name="Nat. Methods">
        <title>De novo derivation of proteomes from transcriptomes for transcript and protein identification.</title>
        <authorList>
            <person name="Evans V.C."/>
            <person name="Barker G."/>
            <person name="Heesom K.J."/>
            <person name="Fan J."/>
            <person name="Bessant C."/>
            <person name="Matthews D.A."/>
        </authorList>
    </citation>
    <scope>NUCLEOTIDE SEQUENCE [MRNA]</scope>
</reference>